<reference key="1">
    <citation type="journal article" date="2000" name="Nature">
        <title>Complete genome sequence of Pseudomonas aeruginosa PAO1, an opportunistic pathogen.</title>
        <authorList>
            <person name="Stover C.K."/>
            <person name="Pham X.-Q.T."/>
            <person name="Erwin A.L."/>
            <person name="Mizoguchi S.D."/>
            <person name="Warrener P."/>
            <person name="Hickey M.J."/>
            <person name="Brinkman F.S.L."/>
            <person name="Hufnagle W.O."/>
            <person name="Kowalik D.J."/>
            <person name="Lagrou M."/>
            <person name="Garber R.L."/>
            <person name="Goltry L."/>
            <person name="Tolentino E."/>
            <person name="Westbrock-Wadman S."/>
            <person name="Yuan Y."/>
            <person name="Brody L.L."/>
            <person name="Coulter S.N."/>
            <person name="Folger K.R."/>
            <person name="Kas A."/>
            <person name="Larbig K."/>
            <person name="Lim R.M."/>
            <person name="Smith K.A."/>
            <person name="Spencer D.H."/>
            <person name="Wong G.K.-S."/>
            <person name="Wu Z."/>
            <person name="Paulsen I.T."/>
            <person name="Reizer J."/>
            <person name="Saier M.H. Jr."/>
            <person name="Hancock R.E.W."/>
            <person name="Lory S."/>
            <person name="Olson M.V."/>
        </authorList>
    </citation>
    <scope>NUCLEOTIDE SEQUENCE [LARGE SCALE GENOMIC DNA]</scope>
    <source>
        <strain>ATCC 15692 / DSM 22644 / CIP 104116 / JCM 14847 / LMG 12228 / 1C / PRS 101 / PAO1</strain>
    </source>
</reference>
<sequence length="309" mass="31423">MAILVIAEHNNAALAAATLNTVAAAKAIGGDIHVLVAGQNVAAVAEAAAKVEGVSKVLVADNAAYAHQLPENVAPLIAELGKNYSHVLAPATTNGKNFLPRVAALLDVDQISEIVEVVSPDTFKRPIYAGNAIATVQSSAAVKVITVRTTGFDAVAAEGGSAAVEQVSGPADAGKSAFVGEELAKSDRPELTAAKIVVSGGRGMQNGDNFKILYALADKLGAAVGASRAAVDAGFVPNDMQVGQTGKIVAPQLYIAVGISGAIQHLAGMKDSKVIVAINKDEEAPIFQVADYGLVADLFDAVPELEKAV</sequence>
<accession>Q9HZP7</accession>
<protein>
    <recommendedName>
        <fullName>Electron transfer flavoprotein subunit alpha</fullName>
        <shortName>Alpha-ETF</shortName>
    </recommendedName>
    <alternativeName>
        <fullName>Electron transfer flavoprotein large subunit</fullName>
        <shortName>ETFLS</shortName>
    </alternativeName>
</protein>
<comment type="function">
    <text evidence="1">The electron transfer flavoprotein serves as a specific electron acceptor for other dehydrogenases. It transfers the electrons to the main respiratory chain via ETF-ubiquinone oxidoreductase (ETF dehydrogenase) (By similarity).</text>
</comment>
<comment type="cofactor">
    <cofactor evidence="1">
        <name>FAD</name>
        <dbReference type="ChEBI" id="CHEBI:57692"/>
    </cofactor>
    <text evidence="1">Binds 1 FAD per dimer.</text>
</comment>
<comment type="subunit">
    <text evidence="1">Heterodimer of an alpha and a beta subunit.</text>
</comment>
<comment type="similarity">
    <text evidence="3">Belongs to the ETF alpha-subunit/FixB family.</text>
</comment>
<organism>
    <name type="scientific">Pseudomonas aeruginosa (strain ATCC 15692 / DSM 22644 / CIP 104116 / JCM 14847 / LMG 12228 / 1C / PRS 101 / PAO1)</name>
    <dbReference type="NCBI Taxonomy" id="208964"/>
    <lineage>
        <taxon>Bacteria</taxon>
        <taxon>Pseudomonadati</taxon>
        <taxon>Pseudomonadota</taxon>
        <taxon>Gammaproteobacteria</taxon>
        <taxon>Pseudomonadales</taxon>
        <taxon>Pseudomonadaceae</taxon>
        <taxon>Pseudomonas</taxon>
    </lineage>
</organism>
<keyword id="KW-0249">Electron transport</keyword>
<keyword id="KW-0274">FAD</keyword>
<keyword id="KW-0285">Flavoprotein</keyword>
<keyword id="KW-1185">Reference proteome</keyword>
<keyword id="KW-0813">Transport</keyword>
<proteinExistence type="inferred from homology"/>
<dbReference type="EMBL" id="AE004091">
    <property type="protein sequence ID" value="AAG06339.1"/>
    <property type="molecule type" value="Genomic_DNA"/>
</dbReference>
<dbReference type="PIR" id="B83277">
    <property type="entry name" value="B83277"/>
</dbReference>
<dbReference type="RefSeq" id="NP_251641.1">
    <property type="nucleotide sequence ID" value="NC_002516.2"/>
</dbReference>
<dbReference type="RefSeq" id="WP_003091099.1">
    <property type="nucleotide sequence ID" value="NZ_QZGE01000009.1"/>
</dbReference>
<dbReference type="SMR" id="Q9HZP7"/>
<dbReference type="FunCoup" id="Q9HZP7">
    <property type="interactions" value="604"/>
</dbReference>
<dbReference type="STRING" id="208964.PA2951"/>
<dbReference type="PaxDb" id="208964-PA2951"/>
<dbReference type="DNASU" id="882932"/>
<dbReference type="GeneID" id="882932"/>
<dbReference type="KEGG" id="pae:PA2951"/>
<dbReference type="PATRIC" id="fig|208964.12.peg.3097"/>
<dbReference type="PseudoCAP" id="PA2951"/>
<dbReference type="HOGENOM" id="CLU_034178_0_0_6"/>
<dbReference type="InParanoid" id="Q9HZP7"/>
<dbReference type="OrthoDB" id="9770286at2"/>
<dbReference type="PhylomeDB" id="Q9HZP7"/>
<dbReference type="BioCyc" id="PAER208964:G1FZ6-3002-MONOMER"/>
<dbReference type="Proteomes" id="UP000002438">
    <property type="component" value="Chromosome"/>
</dbReference>
<dbReference type="GO" id="GO:0009055">
    <property type="term" value="F:electron transfer activity"/>
    <property type="evidence" value="ECO:0000318"/>
    <property type="project" value="GO_Central"/>
</dbReference>
<dbReference type="GO" id="GO:0050660">
    <property type="term" value="F:flavin adenine dinucleotide binding"/>
    <property type="evidence" value="ECO:0000318"/>
    <property type="project" value="GO_Central"/>
</dbReference>
<dbReference type="GO" id="GO:0033539">
    <property type="term" value="P:fatty acid beta-oxidation using acyl-CoA dehydrogenase"/>
    <property type="evidence" value="ECO:0000318"/>
    <property type="project" value="GO_Central"/>
</dbReference>
<dbReference type="CDD" id="cd01715">
    <property type="entry name" value="ETF_alpha"/>
    <property type="match status" value="1"/>
</dbReference>
<dbReference type="FunFam" id="3.40.50.620:FF:000041">
    <property type="entry name" value="Electron transfer flavoprotein alpha subunit"/>
    <property type="match status" value="1"/>
</dbReference>
<dbReference type="FunFam" id="3.40.50.1220:FF:000001">
    <property type="entry name" value="Electron transfer flavoprotein, alpha subunit"/>
    <property type="match status" value="1"/>
</dbReference>
<dbReference type="Gene3D" id="3.40.50.620">
    <property type="entry name" value="HUPs"/>
    <property type="match status" value="1"/>
</dbReference>
<dbReference type="Gene3D" id="3.40.50.1220">
    <property type="entry name" value="TPP-binding domain"/>
    <property type="match status" value="1"/>
</dbReference>
<dbReference type="InterPro" id="IPR029035">
    <property type="entry name" value="DHS-like_NAD/FAD-binding_dom"/>
</dbReference>
<dbReference type="InterPro" id="IPR014730">
    <property type="entry name" value="ETF_a/b_N"/>
</dbReference>
<dbReference type="InterPro" id="IPR001308">
    <property type="entry name" value="ETF_a/FixB"/>
</dbReference>
<dbReference type="InterPro" id="IPR033947">
    <property type="entry name" value="ETF_alpha_N"/>
</dbReference>
<dbReference type="InterPro" id="IPR014731">
    <property type="entry name" value="ETF_asu_C"/>
</dbReference>
<dbReference type="InterPro" id="IPR018206">
    <property type="entry name" value="ETF_asu_C_CS"/>
</dbReference>
<dbReference type="InterPro" id="IPR014729">
    <property type="entry name" value="Rossmann-like_a/b/a_fold"/>
</dbReference>
<dbReference type="PANTHER" id="PTHR43153">
    <property type="entry name" value="ELECTRON TRANSFER FLAVOPROTEIN ALPHA"/>
    <property type="match status" value="1"/>
</dbReference>
<dbReference type="PANTHER" id="PTHR43153:SF1">
    <property type="entry name" value="ELECTRON TRANSFER FLAVOPROTEIN SUBUNIT ALPHA, MITOCHONDRIAL"/>
    <property type="match status" value="1"/>
</dbReference>
<dbReference type="Pfam" id="PF01012">
    <property type="entry name" value="ETF"/>
    <property type="match status" value="1"/>
</dbReference>
<dbReference type="Pfam" id="PF00766">
    <property type="entry name" value="ETF_alpha"/>
    <property type="match status" value="1"/>
</dbReference>
<dbReference type="PIRSF" id="PIRSF000089">
    <property type="entry name" value="Electra_flavoP_a"/>
    <property type="match status" value="1"/>
</dbReference>
<dbReference type="SMART" id="SM00893">
    <property type="entry name" value="ETF"/>
    <property type="match status" value="1"/>
</dbReference>
<dbReference type="SUPFAM" id="SSF52402">
    <property type="entry name" value="Adenine nucleotide alpha hydrolases-like"/>
    <property type="match status" value="1"/>
</dbReference>
<dbReference type="SUPFAM" id="SSF52467">
    <property type="entry name" value="DHS-like NAD/FAD-binding domain"/>
    <property type="match status" value="1"/>
</dbReference>
<dbReference type="PROSITE" id="PS00696">
    <property type="entry name" value="ETF_ALPHA"/>
    <property type="match status" value="1"/>
</dbReference>
<name>ETFA_PSEAE</name>
<gene>
    <name type="primary">etfA</name>
    <name type="ordered locus">PA2951</name>
</gene>
<feature type="chain" id="PRO_0000287791" description="Electron transfer flavoprotein subunit alpha">
    <location>
        <begin position="1"/>
        <end position="309"/>
    </location>
</feature>
<feature type="binding site" evidence="2">
    <location>
        <begin position="253"/>
        <end position="281"/>
    </location>
    <ligand>
        <name>FAD</name>
        <dbReference type="ChEBI" id="CHEBI:57692"/>
    </ligand>
</feature>
<evidence type="ECO:0000250" key="1"/>
<evidence type="ECO:0000255" key="2"/>
<evidence type="ECO:0000305" key="3"/>